<gene>
    <name evidence="2" type="primary">phzB2</name>
    <name type="ordered locus">PA1900</name>
</gene>
<organism>
    <name type="scientific">Pseudomonas aeruginosa (strain ATCC 15692 / DSM 22644 / CIP 104116 / JCM 14847 / LMG 12228 / 1C / PRS 101 / PAO1)</name>
    <dbReference type="NCBI Taxonomy" id="208964"/>
    <lineage>
        <taxon>Bacteria</taxon>
        <taxon>Pseudomonadati</taxon>
        <taxon>Pseudomonadota</taxon>
        <taxon>Gammaproteobacteria</taxon>
        <taxon>Pseudomonadales</taxon>
        <taxon>Pseudomonadaceae</taxon>
        <taxon>Pseudomonas</taxon>
    </lineage>
</organism>
<feature type="chain" id="PRO_0000287801" description="Phenazine biosynthesis protein PhzB2">
    <location>
        <begin position="1"/>
        <end position="162"/>
    </location>
</feature>
<feature type="helix" evidence="6">
    <location>
        <begin position="1"/>
        <end position="3"/>
    </location>
</feature>
<feature type="strand" evidence="6">
    <location>
        <begin position="11"/>
        <end position="13"/>
    </location>
</feature>
<feature type="helix" evidence="6">
    <location>
        <begin position="14"/>
        <end position="28"/>
    </location>
</feature>
<feature type="helix" evidence="6">
    <location>
        <begin position="32"/>
        <end position="41"/>
    </location>
</feature>
<feature type="strand" evidence="6">
    <location>
        <begin position="42"/>
        <end position="52"/>
    </location>
</feature>
<feature type="strand" evidence="6">
    <location>
        <begin position="54"/>
        <end position="57"/>
    </location>
</feature>
<feature type="strand" evidence="6">
    <location>
        <begin position="59"/>
        <end position="63"/>
    </location>
</feature>
<feature type="helix" evidence="6">
    <location>
        <begin position="64"/>
        <end position="77"/>
    </location>
</feature>
<feature type="strand" evidence="6">
    <location>
        <begin position="82"/>
        <end position="93"/>
    </location>
</feature>
<feature type="strand" evidence="6">
    <location>
        <begin position="96"/>
        <end position="107"/>
    </location>
</feature>
<feature type="strand" evidence="6">
    <location>
        <begin position="115"/>
        <end position="128"/>
    </location>
</feature>
<feature type="strand" evidence="6">
    <location>
        <begin position="131"/>
        <end position="139"/>
    </location>
</feature>
<feature type="helix" evidence="6">
    <location>
        <begin position="141"/>
        <end position="147"/>
    </location>
</feature>
<name>PHZB2_PSEAE</name>
<accession>Q9S508</accession>
<accession>Q7DCE0</accession>
<reference key="1">
    <citation type="journal article" date="1999" name="Cell">
        <title>Molecular mechanisms of bacterial virulence elucidated using a Pseudomonas aeruginosa-Caenorhabditis elegans pathogenesis model.</title>
        <authorList>
            <person name="Mahajan-Miklos S."/>
            <person name="Tan M.-W."/>
            <person name="Rahme L.G."/>
            <person name="Ausubel F.M."/>
        </authorList>
    </citation>
    <scope>NUCLEOTIDE SEQUENCE [GENOMIC DNA]</scope>
    <source>
        <strain>UCBPP-PA14</strain>
    </source>
</reference>
<reference key="2">
    <citation type="journal article" date="2000" name="Nature">
        <title>Complete genome sequence of Pseudomonas aeruginosa PAO1, an opportunistic pathogen.</title>
        <authorList>
            <person name="Stover C.K."/>
            <person name="Pham X.-Q.T."/>
            <person name="Erwin A.L."/>
            <person name="Mizoguchi S.D."/>
            <person name="Warrener P."/>
            <person name="Hickey M.J."/>
            <person name="Brinkman F.S.L."/>
            <person name="Hufnagle W.O."/>
            <person name="Kowalik D.J."/>
            <person name="Lagrou M."/>
            <person name="Garber R.L."/>
            <person name="Goltry L."/>
            <person name="Tolentino E."/>
            <person name="Westbrock-Wadman S."/>
            <person name="Yuan Y."/>
            <person name="Brody L.L."/>
            <person name="Coulter S.N."/>
            <person name="Folger K.R."/>
            <person name="Kas A."/>
            <person name="Larbig K."/>
            <person name="Lim R.M."/>
            <person name="Smith K.A."/>
            <person name="Spencer D.H."/>
            <person name="Wong G.K.-S."/>
            <person name="Wu Z."/>
            <person name="Paulsen I.T."/>
            <person name="Reizer J."/>
            <person name="Saier M.H. Jr."/>
            <person name="Hancock R.E.W."/>
            <person name="Lory S."/>
            <person name="Olson M.V."/>
        </authorList>
    </citation>
    <scope>NUCLEOTIDE SEQUENCE [LARGE SCALE GENOMIC DNA]</scope>
    <source>
        <strain>ATCC 15692 / DSM 22644 / CIP 104116 / JCM 14847 / LMG 12228 / 1C / PRS 101 / PAO1</strain>
    </source>
</reference>
<reference key="3">
    <citation type="journal article" date="2001" name="J. Bacteriol.">
        <title>Functional analysis of genes for biosynthesis of pyocyanin and phenazine-1-carboxamide from Pseudomonas aeruginosa PAO1.</title>
        <authorList>
            <person name="Mavrodi D.V."/>
            <person name="Bonsall R.F."/>
            <person name="Delaney S.M."/>
            <person name="Soule M.J."/>
            <person name="Phillips G."/>
            <person name="Thomashow L.S."/>
        </authorList>
    </citation>
    <scope>FUNCTION</scope>
    <scope>PATHWAY</scope>
    <source>
        <strain>ATCC 15692 / DSM 22644 / CIP 104116 / JCM 14847 / LMG 12228 / 1C / PRS 101 / PAO1</strain>
    </source>
</reference>
<reference key="4">
    <citation type="journal article" date="2012" name="Proc. Natl. Acad. Sci. U.S.A.">
        <title>Redundant phenazine operons in Pseudomonas aeruginosa exhibit environment-dependent expression and differential roles in pathogenicity.</title>
        <authorList>
            <person name="Recinos D.A."/>
            <person name="Sekedat M.D."/>
            <person name="Hernandez A."/>
            <person name="Cohen T.S."/>
            <person name="Sakhtah H."/>
            <person name="Prince A.S."/>
            <person name="Price-Whelan A."/>
            <person name="Dietrich L.E."/>
        </authorList>
    </citation>
    <scope>FUNCTION</scope>
    <scope>INDUCTION</scope>
</reference>
<reference key="5">
    <citation type="submission" date="2008-12" db="PDB data bank">
        <title>Crystal structure of protein PhzB2 with cystatin-like fold and unknown function in phenazine biosynthesis (NP_250591.1) from Pseudomonas aeruginosa at 1.90 A resolution.</title>
        <authorList>
            <consortium name="Joint center for structural genomics (JCSG)"/>
        </authorList>
    </citation>
    <scope>X-RAY CRYSTALLOGRAPHY (1.90 ANGSTROMS)</scope>
    <scope>SUBUNIT</scope>
</reference>
<dbReference type="EMBL" id="AF092442">
    <property type="protein sequence ID" value="AAD45625.1"/>
    <property type="molecule type" value="Genomic_DNA"/>
</dbReference>
<dbReference type="EMBL" id="AE004091">
    <property type="protein sequence ID" value="AAG05289.1"/>
    <property type="molecule type" value="Genomic_DNA"/>
</dbReference>
<dbReference type="PIR" id="F83407">
    <property type="entry name" value="F83407"/>
</dbReference>
<dbReference type="RefSeq" id="NP_250591.1">
    <property type="nucleotide sequence ID" value="NC_002516.2"/>
</dbReference>
<dbReference type="PDB" id="3FF0">
    <property type="method" value="X-ray"/>
    <property type="resolution" value="1.90 A"/>
    <property type="chains" value="A/B=1-162"/>
</dbReference>
<dbReference type="PDBsum" id="3FF0"/>
<dbReference type="SMR" id="Q9S508"/>
<dbReference type="STRING" id="208964.PA1900"/>
<dbReference type="PaxDb" id="208964-PA1900"/>
<dbReference type="DNASU" id="878211"/>
<dbReference type="GeneID" id="878211"/>
<dbReference type="KEGG" id="pae:PA1900"/>
<dbReference type="PATRIC" id="fig|208964.12.peg.1978"/>
<dbReference type="PseudoCAP" id="PA1900"/>
<dbReference type="HOGENOM" id="CLU_141345_0_0_6"/>
<dbReference type="InParanoid" id="Q9S508"/>
<dbReference type="OrthoDB" id="8479735at2"/>
<dbReference type="PhylomeDB" id="Q9S508"/>
<dbReference type="BioCyc" id="PAER208964:G1FZ6-1940-MONOMER"/>
<dbReference type="UniPathway" id="UPA00099"/>
<dbReference type="EvolutionaryTrace" id="Q9S508"/>
<dbReference type="Proteomes" id="UP000002438">
    <property type="component" value="Chromosome"/>
</dbReference>
<dbReference type="GO" id="GO:0002047">
    <property type="term" value="P:phenazine biosynthetic process"/>
    <property type="evidence" value="ECO:0000314"/>
    <property type="project" value="PseudoCAP"/>
</dbReference>
<dbReference type="FunFam" id="3.10.450.50:FF:000014">
    <property type="entry name" value="Phenazine biosynthesis protein PhzB 2"/>
    <property type="match status" value="1"/>
</dbReference>
<dbReference type="Gene3D" id="3.10.450.50">
    <property type="match status" value="1"/>
</dbReference>
<dbReference type="InterPro" id="IPR032710">
    <property type="entry name" value="NTF2-like_dom_sf"/>
</dbReference>
<dbReference type="InterPro" id="IPR004964">
    <property type="entry name" value="PhzA_PhzB"/>
</dbReference>
<dbReference type="Pfam" id="PF03284">
    <property type="entry name" value="PHZA_PHZB"/>
    <property type="match status" value="1"/>
</dbReference>
<dbReference type="SUPFAM" id="SSF54427">
    <property type="entry name" value="NTF2-like"/>
    <property type="match status" value="1"/>
</dbReference>
<evidence type="ECO:0000269" key="1">
    <source>
    </source>
</evidence>
<evidence type="ECO:0000303" key="2">
    <source>
    </source>
</evidence>
<evidence type="ECO:0000305" key="3"/>
<evidence type="ECO:0000305" key="4">
    <source>
    </source>
</evidence>
<evidence type="ECO:0000305" key="5">
    <source ref="5"/>
</evidence>
<evidence type="ECO:0007829" key="6">
    <source>
        <dbReference type="PDB" id="3FF0"/>
    </source>
</evidence>
<sequence length="162" mass="19028">MLDNAIPQGFEDAVELRRKNRETVVKYMNTKGQDRLRRHELFVEDGCGGLWTTDTGSPIVIRGKDKLAEHAVWSLKCFPDWEWYNIKVFETDDPNHFWVECDGHGKILFPGYPEGYYENHFLHSFELDDGKIKRNREFMNVFQQLRALSIPVPQIKREGIPT</sequence>
<keyword id="KW-0002">3D-structure</keyword>
<keyword id="KW-0045">Antibiotic biosynthesis</keyword>
<keyword id="KW-1185">Reference proteome</keyword>
<keyword id="KW-0843">Virulence</keyword>
<protein>
    <recommendedName>
        <fullName evidence="2">Phenazine biosynthesis protein PhzB2</fullName>
    </recommendedName>
</protein>
<comment type="function">
    <text evidence="1 4">Involved in the biosynthesis of the antibiotic phenazine, a nitrogen-containing heterocyclic molecule having important roles in virulence, competition and biological control. PhzB2 (operon phzA2B2C2E2F2G2) has a role in the biosynthesis of the phenazine during both planktonic growth and biofilm development, and in host infection during biofilm development.</text>
</comment>
<comment type="pathway">
    <text evidence="4">Antibiotic biosynthesis; phenazine biosynthesis.</text>
</comment>
<comment type="subunit">
    <text evidence="5">Homodimer.</text>
</comment>
<comment type="induction">
    <text evidence="1">In liquid cultures (aerobic), phz2 operon is induced by quinolone signal via 2-heptyl-3-hydroxy-4-quinolone (PQS). In biofilm (microaerobic), phz2 operon is induced by quinolone signal via 4-hydroxy-2-heptylquinoline (HHQ), a precursor of PQS.</text>
</comment>
<comment type="similarity">
    <text evidence="3">Belongs to the PhzA/PhzB family.</text>
</comment>
<proteinExistence type="evidence at protein level"/>